<protein>
    <recommendedName>
        <fullName evidence="1">Protein GrpE</fullName>
    </recommendedName>
    <alternativeName>
        <fullName evidence="1">HSP-70 cofactor</fullName>
    </alternativeName>
</protein>
<gene>
    <name evidence="1" type="primary">grpE</name>
    <name type="ordered locus">Tcr_0869</name>
</gene>
<sequence>MSDNKTELNEEQHNATAEGEVSEETHQAEDAVEHDLEAMLEEARKEAESQKELALRTLADMENLKRRTRMDVESAHKFALEKFVNELLPVLDSMEMGLDASSKEDVTIDSIREGLDMTFKQFLDVMQKFNVERVNPTGEKFDPQLHEAMTMIPSPDHDSQMVIEVFQKGYVLNDRLVRPARVVVAE</sequence>
<evidence type="ECO:0000255" key="1">
    <source>
        <dbReference type="HAMAP-Rule" id="MF_01151"/>
    </source>
</evidence>
<evidence type="ECO:0000256" key="2">
    <source>
        <dbReference type="SAM" id="MobiDB-lite"/>
    </source>
</evidence>
<proteinExistence type="inferred from homology"/>
<feature type="chain" id="PRO_1000053657" description="Protein GrpE">
    <location>
        <begin position="1"/>
        <end position="186"/>
    </location>
</feature>
<feature type="region of interest" description="Disordered" evidence="2">
    <location>
        <begin position="1"/>
        <end position="34"/>
    </location>
</feature>
<feature type="compositionally biased region" description="Basic and acidic residues" evidence="2">
    <location>
        <begin position="1"/>
        <end position="13"/>
    </location>
</feature>
<feature type="compositionally biased region" description="Basic and acidic residues" evidence="2">
    <location>
        <begin position="23"/>
        <end position="34"/>
    </location>
</feature>
<dbReference type="EMBL" id="CP000109">
    <property type="protein sequence ID" value="ABB41465.1"/>
    <property type="molecule type" value="Genomic_DNA"/>
</dbReference>
<dbReference type="SMR" id="Q31HA8"/>
<dbReference type="STRING" id="317025.Tcr_0869"/>
<dbReference type="KEGG" id="tcx:Tcr_0869"/>
<dbReference type="eggNOG" id="COG0576">
    <property type="taxonomic scope" value="Bacteria"/>
</dbReference>
<dbReference type="HOGENOM" id="CLU_057217_6_0_6"/>
<dbReference type="OrthoDB" id="9789811at2"/>
<dbReference type="GO" id="GO:0005829">
    <property type="term" value="C:cytosol"/>
    <property type="evidence" value="ECO:0007669"/>
    <property type="project" value="TreeGrafter"/>
</dbReference>
<dbReference type="GO" id="GO:0000774">
    <property type="term" value="F:adenyl-nucleotide exchange factor activity"/>
    <property type="evidence" value="ECO:0007669"/>
    <property type="project" value="InterPro"/>
</dbReference>
<dbReference type="GO" id="GO:0042803">
    <property type="term" value="F:protein homodimerization activity"/>
    <property type="evidence" value="ECO:0007669"/>
    <property type="project" value="InterPro"/>
</dbReference>
<dbReference type="GO" id="GO:0051087">
    <property type="term" value="F:protein-folding chaperone binding"/>
    <property type="evidence" value="ECO:0007669"/>
    <property type="project" value="InterPro"/>
</dbReference>
<dbReference type="GO" id="GO:0051082">
    <property type="term" value="F:unfolded protein binding"/>
    <property type="evidence" value="ECO:0007669"/>
    <property type="project" value="TreeGrafter"/>
</dbReference>
<dbReference type="GO" id="GO:0006457">
    <property type="term" value="P:protein folding"/>
    <property type="evidence" value="ECO:0007669"/>
    <property type="project" value="InterPro"/>
</dbReference>
<dbReference type="CDD" id="cd00446">
    <property type="entry name" value="GrpE"/>
    <property type="match status" value="1"/>
</dbReference>
<dbReference type="FunFam" id="2.30.22.10:FF:000001">
    <property type="entry name" value="Protein GrpE"/>
    <property type="match status" value="1"/>
</dbReference>
<dbReference type="Gene3D" id="3.90.20.20">
    <property type="match status" value="1"/>
</dbReference>
<dbReference type="Gene3D" id="2.30.22.10">
    <property type="entry name" value="Head domain of nucleotide exchange factor GrpE"/>
    <property type="match status" value="1"/>
</dbReference>
<dbReference type="HAMAP" id="MF_01151">
    <property type="entry name" value="GrpE"/>
    <property type="match status" value="1"/>
</dbReference>
<dbReference type="InterPro" id="IPR000740">
    <property type="entry name" value="GrpE"/>
</dbReference>
<dbReference type="InterPro" id="IPR013805">
    <property type="entry name" value="GrpE_coiled_coil"/>
</dbReference>
<dbReference type="InterPro" id="IPR009012">
    <property type="entry name" value="GrpE_head"/>
</dbReference>
<dbReference type="NCBIfam" id="NF010737">
    <property type="entry name" value="PRK14139.1"/>
    <property type="match status" value="1"/>
</dbReference>
<dbReference type="NCBIfam" id="NF010738">
    <property type="entry name" value="PRK14140.1"/>
    <property type="match status" value="1"/>
</dbReference>
<dbReference type="NCBIfam" id="NF010748">
    <property type="entry name" value="PRK14150.1"/>
    <property type="match status" value="1"/>
</dbReference>
<dbReference type="PANTHER" id="PTHR21237">
    <property type="entry name" value="GRPE PROTEIN"/>
    <property type="match status" value="1"/>
</dbReference>
<dbReference type="PANTHER" id="PTHR21237:SF23">
    <property type="entry name" value="GRPE PROTEIN HOMOLOG, MITOCHONDRIAL"/>
    <property type="match status" value="1"/>
</dbReference>
<dbReference type="Pfam" id="PF01025">
    <property type="entry name" value="GrpE"/>
    <property type="match status" value="1"/>
</dbReference>
<dbReference type="PRINTS" id="PR00773">
    <property type="entry name" value="GRPEPROTEIN"/>
</dbReference>
<dbReference type="SUPFAM" id="SSF58014">
    <property type="entry name" value="Coiled-coil domain of nucleotide exchange factor GrpE"/>
    <property type="match status" value="1"/>
</dbReference>
<dbReference type="SUPFAM" id="SSF51064">
    <property type="entry name" value="Head domain of nucleotide exchange factor GrpE"/>
    <property type="match status" value="1"/>
</dbReference>
<dbReference type="PROSITE" id="PS01071">
    <property type="entry name" value="GRPE"/>
    <property type="match status" value="1"/>
</dbReference>
<keyword id="KW-0143">Chaperone</keyword>
<keyword id="KW-0963">Cytoplasm</keyword>
<keyword id="KW-0346">Stress response</keyword>
<reference key="1">
    <citation type="journal article" date="2006" name="PLoS Biol.">
        <title>The genome of deep-sea vent chemolithoautotroph Thiomicrospira crunogena XCL-2.</title>
        <authorList>
            <person name="Scott K.M."/>
            <person name="Sievert S.M."/>
            <person name="Abril F.N."/>
            <person name="Ball L.A."/>
            <person name="Barrett C.J."/>
            <person name="Blake R.A."/>
            <person name="Boller A.J."/>
            <person name="Chain P.S.G."/>
            <person name="Clark J.A."/>
            <person name="Davis C.R."/>
            <person name="Detter C."/>
            <person name="Do K.F."/>
            <person name="Dobrinski K.P."/>
            <person name="Faza B.I."/>
            <person name="Fitzpatrick K.A."/>
            <person name="Freyermuth S.K."/>
            <person name="Harmer T.L."/>
            <person name="Hauser L.J."/>
            <person name="Huegler M."/>
            <person name="Kerfeld C.A."/>
            <person name="Klotz M.G."/>
            <person name="Kong W.W."/>
            <person name="Land M."/>
            <person name="Lapidus A."/>
            <person name="Larimer F.W."/>
            <person name="Longo D.L."/>
            <person name="Lucas S."/>
            <person name="Malfatti S.A."/>
            <person name="Massey S.E."/>
            <person name="Martin D.D."/>
            <person name="McCuddin Z."/>
            <person name="Meyer F."/>
            <person name="Moore J.L."/>
            <person name="Ocampo L.H. Jr."/>
            <person name="Paul J.H."/>
            <person name="Paulsen I.T."/>
            <person name="Reep D.K."/>
            <person name="Ren Q."/>
            <person name="Ross R.L."/>
            <person name="Sato P.Y."/>
            <person name="Thomas P."/>
            <person name="Tinkham L.E."/>
            <person name="Zeruth G.T."/>
        </authorList>
    </citation>
    <scope>NUCLEOTIDE SEQUENCE [LARGE SCALE GENOMIC DNA]</scope>
    <source>
        <strain>DSM 25203 / XCL-2</strain>
    </source>
</reference>
<name>GRPE_HYDCU</name>
<organism>
    <name type="scientific">Hydrogenovibrio crunogenus (strain DSM 25203 / XCL-2)</name>
    <name type="common">Thiomicrospira crunogena</name>
    <dbReference type="NCBI Taxonomy" id="317025"/>
    <lineage>
        <taxon>Bacteria</taxon>
        <taxon>Pseudomonadati</taxon>
        <taxon>Pseudomonadota</taxon>
        <taxon>Gammaproteobacteria</taxon>
        <taxon>Thiotrichales</taxon>
        <taxon>Piscirickettsiaceae</taxon>
        <taxon>Hydrogenovibrio</taxon>
    </lineage>
</organism>
<comment type="function">
    <text evidence="1">Participates actively in the response to hyperosmotic and heat shock by preventing the aggregation of stress-denatured proteins, in association with DnaK and GrpE. It is the nucleotide exchange factor for DnaK and may function as a thermosensor. Unfolded proteins bind initially to DnaJ; upon interaction with the DnaJ-bound protein, DnaK hydrolyzes its bound ATP, resulting in the formation of a stable complex. GrpE releases ADP from DnaK; ATP binding to DnaK triggers the release of the substrate protein, thus completing the reaction cycle. Several rounds of ATP-dependent interactions between DnaJ, DnaK and GrpE are required for fully efficient folding.</text>
</comment>
<comment type="subunit">
    <text evidence="1">Homodimer.</text>
</comment>
<comment type="subcellular location">
    <subcellularLocation>
        <location evidence="1">Cytoplasm</location>
    </subcellularLocation>
</comment>
<comment type="similarity">
    <text evidence="1">Belongs to the GrpE family.</text>
</comment>
<accession>Q31HA8</accession>